<comment type="function">
    <text evidence="1">This protein binds specifically to 23S rRNA.</text>
</comment>
<comment type="function">
    <text evidence="1">The globular domain of the protein is located near the polypeptide exit tunnel on the outside of the subunit, while an extended beta-hairpin is found that lines the wall of the exit tunnel in the center of the 70S ribosome.</text>
</comment>
<comment type="subunit">
    <text evidence="1">Part of the 50S ribosomal subunit.</text>
</comment>
<comment type="subcellular location">
    <subcellularLocation>
        <location>Plastid</location>
    </subcellularLocation>
</comment>
<comment type="similarity">
    <text evidence="2">Belongs to the universal ribosomal protein uL22 family.</text>
</comment>
<comment type="caution">
    <text evidence="2">Young tissue from this organism is photosynthetic and contains some thylakoids, although the photosynthetic activity does not exceed the light compensation point.</text>
</comment>
<name>RK22_CUSGR</name>
<geneLocation type="plastid"/>
<reference key="1">
    <citation type="journal article" date="2007" name="BMC Plant Biol.">
        <title>Complete DNA sequences of the plastid genomes of two parasitic flowering plant species, Cuscuta reflexa and Cuscuta gronovii.</title>
        <authorList>
            <person name="Funk H.T."/>
            <person name="Berg S."/>
            <person name="Krupinska K."/>
            <person name="Maier U.-G."/>
            <person name="Krause K."/>
        </authorList>
    </citation>
    <scope>NUCLEOTIDE SEQUENCE [LARGE SCALE GENOMIC DNA]</scope>
</reference>
<gene>
    <name type="primary">rpl22</name>
</gene>
<organism>
    <name type="scientific">Cuscuta gronovii</name>
    <name type="common">Common dodder</name>
    <name type="synonym">Epithymum gronovii</name>
    <dbReference type="NCBI Taxonomy" id="35886"/>
    <lineage>
        <taxon>Eukaryota</taxon>
        <taxon>Viridiplantae</taxon>
        <taxon>Streptophyta</taxon>
        <taxon>Embryophyta</taxon>
        <taxon>Tracheophyta</taxon>
        <taxon>Spermatophyta</taxon>
        <taxon>Magnoliopsida</taxon>
        <taxon>eudicotyledons</taxon>
        <taxon>Gunneridae</taxon>
        <taxon>Pentapetalae</taxon>
        <taxon>asterids</taxon>
        <taxon>lamiids</taxon>
        <taxon>Solanales</taxon>
        <taxon>Convolvulaceae</taxon>
        <taxon>Cuscuteae</taxon>
        <taxon>Cuscuta</taxon>
        <taxon>Cuscuta subgen. Grammica</taxon>
        <taxon>Cuscuta sect. Oxycarpae</taxon>
    </lineage>
</organism>
<dbReference type="EMBL" id="AM711639">
    <property type="protein sequence ID" value="CAM98363.1"/>
    <property type="molecule type" value="Genomic_DNA"/>
</dbReference>
<dbReference type="RefSeq" id="YP_001430076.1">
    <property type="nucleotide sequence ID" value="NC_009765.1"/>
</dbReference>
<dbReference type="SMR" id="A7M935"/>
<dbReference type="GeneID" id="5536789"/>
<dbReference type="GO" id="GO:0015934">
    <property type="term" value="C:large ribosomal subunit"/>
    <property type="evidence" value="ECO:0007669"/>
    <property type="project" value="InterPro"/>
</dbReference>
<dbReference type="GO" id="GO:0009536">
    <property type="term" value="C:plastid"/>
    <property type="evidence" value="ECO:0007669"/>
    <property type="project" value="UniProtKB-SubCell"/>
</dbReference>
<dbReference type="GO" id="GO:0019843">
    <property type="term" value="F:rRNA binding"/>
    <property type="evidence" value="ECO:0007669"/>
    <property type="project" value="UniProtKB-KW"/>
</dbReference>
<dbReference type="GO" id="GO:0003735">
    <property type="term" value="F:structural constituent of ribosome"/>
    <property type="evidence" value="ECO:0007669"/>
    <property type="project" value="InterPro"/>
</dbReference>
<dbReference type="GO" id="GO:0006412">
    <property type="term" value="P:translation"/>
    <property type="evidence" value="ECO:0007669"/>
    <property type="project" value="InterPro"/>
</dbReference>
<dbReference type="CDD" id="cd00336">
    <property type="entry name" value="Ribosomal_L22"/>
    <property type="match status" value="1"/>
</dbReference>
<dbReference type="Gene3D" id="3.90.470.10">
    <property type="entry name" value="Ribosomal protein L22/L17"/>
    <property type="match status" value="1"/>
</dbReference>
<dbReference type="HAMAP" id="MF_01331_B">
    <property type="entry name" value="Ribosomal_uL22_B"/>
    <property type="match status" value="1"/>
</dbReference>
<dbReference type="InterPro" id="IPR001063">
    <property type="entry name" value="Ribosomal_uL22"/>
</dbReference>
<dbReference type="InterPro" id="IPR005727">
    <property type="entry name" value="Ribosomal_uL22_bac/chlpt-type"/>
</dbReference>
<dbReference type="InterPro" id="IPR047867">
    <property type="entry name" value="Ribosomal_uL22_bac/org-type"/>
</dbReference>
<dbReference type="InterPro" id="IPR018260">
    <property type="entry name" value="Ribosomal_uL22_CS"/>
</dbReference>
<dbReference type="InterPro" id="IPR036394">
    <property type="entry name" value="Ribosomal_uL22_sf"/>
</dbReference>
<dbReference type="NCBIfam" id="TIGR01044">
    <property type="entry name" value="rplV_bact"/>
    <property type="match status" value="1"/>
</dbReference>
<dbReference type="PANTHER" id="PTHR13501">
    <property type="entry name" value="CHLOROPLAST 50S RIBOSOMAL PROTEIN L22-RELATED"/>
    <property type="match status" value="1"/>
</dbReference>
<dbReference type="PANTHER" id="PTHR13501:SF10">
    <property type="entry name" value="LARGE RIBOSOMAL SUBUNIT PROTEIN UL22M"/>
    <property type="match status" value="1"/>
</dbReference>
<dbReference type="Pfam" id="PF00237">
    <property type="entry name" value="Ribosomal_L22"/>
    <property type="match status" value="1"/>
</dbReference>
<dbReference type="SUPFAM" id="SSF54843">
    <property type="entry name" value="Ribosomal protein L22"/>
    <property type="match status" value="1"/>
</dbReference>
<dbReference type="PROSITE" id="PS00464">
    <property type="entry name" value="RIBOSOMAL_L22"/>
    <property type="match status" value="1"/>
</dbReference>
<evidence type="ECO:0000250" key="1"/>
<evidence type="ECO:0000305" key="2"/>
<keyword id="KW-0934">Plastid</keyword>
<keyword id="KW-0687">Ribonucleoprotein</keyword>
<keyword id="KW-0689">Ribosomal protein</keyword>
<keyword id="KW-0694">RNA-binding</keyword>
<keyword id="KW-0699">rRNA-binding</keyword>
<feature type="chain" id="PRO_0000354568" description="Large ribosomal subunit protein uL22c">
    <location>
        <begin position="1"/>
        <end position="147"/>
    </location>
</feature>
<proteinExistence type="inferred from homology"/>
<protein>
    <recommendedName>
        <fullName evidence="2">Large ribosomal subunit protein uL22c</fullName>
    </recommendedName>
    <alternativeName>
        <fullName>50S ribosomal protein L22, plastid</fullName>
    </alternativeName>
</protein>
<sequence length="147" mass="17052">MTKKTKPETYVFSQNFPISADKARRVIDRIRGRSYEETLVILELLPYRAAYPIFKFVCFAASNASSTSTSKKENLFISKAEVNERPAIKKLKPRARGRSYPIKKATCHITIVLTDLSFYFNELVEPQQEKNLLTKLYLNLRGLWDKK</sequence>
<accession>A7M935</accession>